<name>CMOB_IDILO</name>
<accession>Q5R0Q5</accession>
<sequence length="323" mass="36937">MVDFSKELRALVQSPHSQWLDTLAPQLTAFKNNPHGNLKRWQRVLTQLPNLTAKHVKLSNTVQVGEADEASDADRARLTGLLQQLQPWRKGPFDLFGVFIDTEWRSDWKWQRVAPHLDDLSGRQVLDVGCGSGYHLWRMLEAGAEQVWGIDPGELFLMQFRAISQLMPLSWQQRAHFFPVGIEHMPELKSFDTVFSMGVLYHRRSPVEFLQQLKSLIRPGGQLVLETIVVEGDETTVMMPGERYAQMRNVWFLPSASALSVWLERLGFKDISVVDHNTTSIDEQRRTDWMTGESLADFLDPNDTNKTIEGYQAPIRAVITARV</sequence>
<keyword id="KW-1185">Reference proteome</keyword>
<keyword id="KW-0808">Transferase</keyword>
<keyword id="KW-0819">tRNA processing</keyword>
<dbReference type="EC" id="2.5.1.-" evidence="1"/>
<dbReference type="EMBL" id="AE017340">
    <property type="protein sequence ID" value="AAV81932.1"/>
    <property type="molecule type" value="Genomic_DNA"/>
</dbReference>
<dbReference type="RefSeq" id="WP_011234343.1">
    <property type="nucleotide sequence ID" value="NC_006512.1"/>
</dbReference>
<dbReference type="SMR" id="Q5R0Q5"/>
<dbReference type="STRING" id="283942.IL1092"/>
<dbReference type="GeneID" id="41336260"/>
<dbReference type="KEGG" id="ilo:IL1092"/>
<dbReference type="eggNOG" id="COG2227">
    <property type="taxonomic scope" value="Bacteria"/>
</dbReference>
<dbReference type="HOGENOM" id="CLU_052665_0_0_6"/>
<dbReference type="OrthoDB" id="9773188at2"/>
<dbReference type="Proteomes" id="UP000001171">
    <property type="component" value="Chromosome"/>
</dbReference>
<dbReference type="GO" id="GO:0016765">
    <property type="term" value="F:transferase activity, transferring alkyl or aryl (other than methyl) groups"/>
    <property type="evidence" value="ECO:0007669"/>
    <property type="project" value="UniProtKB-UniRule"/>
</dbReference>
<dbReference type="GO" id="GO:0002098">
    <property type="term" value="P:tRNA wobble uridine modification"/>
    <property type="evidence" value="ECO:0007669"/>
    <property type="project" value="InterPro"/>
</dbReference>
<dbReference type="CDD" id="cd02440">
    <property type="entry name" value="AdoMet_MTases"/>
    <property type="match status" value="1"/>
</dbReference>
<dbReference type="Gene3D" id="3.40.50.150">
    <property type="entry name" value="Vaccinia Virus protein VP39"/>
    <property type="match status" value="1"/>
</dbReference>
<dbReference type="HAMAP" id="MF_01590">
    <property type="entry name" value="tRNA_carboxymethyltr_CmoB"/>
    <property type="match status" value="1"/>
</dbReference>
<dbReference type="InterPro" id="IPR010017">
    <property type="entry name" value="CmoB"/>
</dbReference>
<dbReference type="InterPro" id="IPR027555">
    <property type="entry name" value="Mo5U34_MeTrfas-like"/>
</dbReference>
<dbReference type="InterPro" id="IPR029063">
    <property type="entry name" value="SAM-dependent_MTases_sf"/>
</dbReference>
<dbReference type="NCBIfam" id="NF011650">
    <property type="entry name" value="PRK15068.1"/>
    <property type="match status" value="1"/>
</dbReference>
<dbReference type="NCBIfam" id="TIGR00452">
    <property type="entry name" value="tRNA 5-methoxyuridine(34)/uridine 5-oxyacetic acid(34) synthase CmoB"/>
    <property type="match status" value="1"/>
</dbReference>
<dbReference type="PANTHER" id="PTHR43861:SF3">
    <property type="entry name" value="PUTATIVE (AFU_ORTHOLOGUE AFUA_2G14390)-RELATED"/>
    <property type="match status" value="1"/>
</dbReference>
<dbReference type="PANTHER" id="PTHR43861">
    <property type="entry name" value="TRANS-ACONITATE 2-METHYLTRANSFERASE-RELATED"/>
    <property type="match status" value="1"/>
</dbReference>
<dbReference type="Pfam" id="PF08003">
    <property type="entry name" value="Methyltransf_9"/>
    <property type="match status" value="1"/>
</dbReference>
<dbReference type="SUPFAM" id="SSF53335">
    <property type="entry name" value="S-adenosyl-L-methionine-dependent methyltransferases"/>
    <property type="match status" value="1"/>
</dbReference>
<proteinExistence type="inferred from homology"/>
<organism>
    <name type="scientific">Idiomarina loihiensis (strain ATCC BAA-735 / DSM 15497 / L2-TR)</name>
    <dbReference type="NCBI Taxonomy" id="283942"/>
    <lineage>
        <taxon>Bacteria</taxon>
        <taxon>Pseudomonadati</taxon>
        <taxon>Pseudomonadota</taxon>
        <taxon>Gammaproteobacteria</taxon>
        <taxon>Alteromonadales</taxon>
        <taxon>Idiomarinaceae</taxon>
        <taxon>Idiomarina</taxon>
    </lineage>
</organism>
<reference key="1">
    <citation type="journal article" date="2004" name="Proc. Natl. Acad. Sci. U.S.A.">
        <title>Genome sequence of the deep-sea gamma-proteobacterium Idiomarina loihiensis reveals amino acid fermentation as a source of carbon and energy.</title>
        <authorList>
            <person name="Hou S."/>
            <person name="Saw J.H."/>
            <person name="Lee K.S."/>
            <person name="Freitas T.A."/>
            <person name="Belisle C."/>
            <person name="Kawarabayasi Y."/>
            <person name="Donachie S.P."/>
            <person name="Pikina A."/>
            <person name="Galperin M.Y."/>
            <person name="Koonin E.V."/>
            <person name="Makarova K.S."/>
            <person name="Omelchenko M.V."/>
            <person name="Sorokin A."/>
            <person name="Wolf Y.I."/>
            <person name="Li Q.X."/>
            <person name="Keum Y.S."/>
            <person name="Campbell S."/>
            <person name="Denery J."/>
            <person name="Aizawa S."/>
            <person name="Shibata S."/>
            <person name="Malahoff A."/>
            <person name="Alam M."/>
        </authorList>
    </citation>
    <scope>NUCLEOTIDE SEQUENCE [LARGE SCALE GENOMIC DNA]</scope>
    <source>
        <strain>ATCC BAA-735 / DSM 15497 / L2-TR</strain>
    </source>
</reference>
<gene>
    <name evidence="1" type="primary">cmoB</name>
    <name type="ordered locus">IL1092</name>
</gene>
<protein>
    <recommendedName>
        <fullName evidence="1">tRNA U34 carboxymethyltransferase</fullName>
        <ecNumber evidence="1">2.5.1.-</ecNumber>
    </recommendedName>
</protein>
<evidence type="ECO:0000255" key="1">
    <source>
        <dbReference type="HAMAP-Rule" id="MF_01590"/>
    </source>
</evidence>
<comment type="function">
    <text evidence="1">Catalyzes carboxymethyl transfer from carboxy-S-adenosyl-L-methionine (Cx-SAM) to 5-hydroxyuridine (ho5U) to form 5-carboxymethoxyuridine (cmo5U) at position 34 in tRNAs.</text>
</comment>
<comment type="catalytic activity">
    <reaction evidence="1">
        <text>carboxy-S-adenosyl-L-methionine + 5-hydroxyuridine(34) in tRNA = 5-carboxymethoxyuridine(34) in tRNA + S-adenosyl-L-homocysteine + H(+)</text>
        <dbReference type="Rhea" id="RHEA:52848"/>
        <dbReference type="Rhea" id="RHEA-COMP:13381"/>
        <dbReference type="Rhea" id="RHEA-COMP:13383"/>
        <dbReference type="ChEBI" id="CHEBI:15378"/>
        <dbReference type="ChEBI" id="CHEBI:57856"/>
        <dbReference type="ChEBI" id="CHEBI:134278"/>
        <dbReference type="ChEBI" id="CHEBI:136877"/>
        <dbReference type="ChEBI" id="CHEBI:136879"/>
    </reaction>
</comment>
<comment type="subunit">
    <text evidence="1">Homotetramer.</text>
</comment>
<comment type="similarity">
    <text evidence="1">Belongs to the class I-like SAM-binding methyltransferase superfamily. CmoB family.</text>
</comment>
<feature type="chain" id="PRO_0000313932" description="tRNA U34 carboxymethyltransferase">
    <location>
        <begin position="1"/>
        <end position="323"/>
    </location>
</feature>
<feature type="binding site" evidence="1">
    <location>
        <position position="90"/>
    </location>
    <ligand>
        <name>carboxy-S-adenosyl-L-methionine</name>
        <dbReference type="ChEBI" id="CHEBI:134278"/>
    </ligand>
</feature>
<feature type="binding site" evidence="1">
    <location>
        <position position="104"/>
    </location>
    <ligand>
        <name>carboxy-S-adenosyl-L-methionine</name>
        <dbReference type="ChEBI" id="CHEBI:134278"/>
    </ligand>
</feature>
<feature type="binding site" evidence="1">
    <location>
        <position position="109"/>
    </location>
    <ligand>
        <name>carboxy-S-adenosyl-L-methionine</name>
        <dbReference type="ChEBI" id="CHEBI:134278"/>
    </ligand>
</feature>
<feature type="binding site" evidence="1">
    <location>
        <position position="129"/>
    </location>
    <ligand>
        <name>carboxy-S-adenosyl-L-methionine</name>
        <dbReference type="ChEBI" id="CHEBI:134278"/>
    </ligand>
</feature>
<feature type="binding site" evidence="1">
    <location>
        <begin position="182"/>
        <end position="183"/>
    </location>
    <ligand>
        <name>carboxy-S-adenosyl-L-methionine</name>
        <dbReference type="ChEBI" id="CHEBI:134278"/>
    </ligand>
</feature>
<feature type="binding site" evidence="1">
    <location>
        <position position="197"/>
    </location>
    <ligand>
        <name>carboxy-S-adenosyl-L-methionine</name>
        <dbReference type="ChEBI" id="CHEBI:134278"/>
    </ligand>
</feature>
<feature type="binding site" evidence="1">
    <location>
        <position position="201"/>
    </location>
    <ligand>
        <name>carboxy-S-adenosyl-L-methionine</name>
        <dbReference type="ChEBI" id="CHEBI:134278"/>
    </ligand>
</feature>
<feature type="binding site" evidence="1">
    <location>
        <position position="316"/>
    </location>
    <ligand>
        <name>carboxy-S-adenosyl-L-methionine</name>
        <dbReference type="ChEBI" id="CHEBI:134278"/>
    </ligand>
</feature>